<reference key="1">
    <citation type="journal article" date="2004" name="Proc. Natl. Acad. Sci. U.S.A.">
        <title>Complete genomes of two clinical Staphylococcus aureus strains: evidence for the rapid evolution of virulence and drug resistance.</title>
        <authorList>
            <person name="Holden M.T.G."/>
            <person name="Feil E.J."/>
            <person name="Lindsay J.A."/>
            <person name="Peacock S.J."/>
            <person name="Day N.P.J."/>
            <person name="Enright M.C."/>
            <person name="Foster T.J."/>
            <person name="Moore C.E."/>
            <person name="Hurst L."/>
            <person name="Atkin R."/>
            <person name="Barron A."/>
            <person name="Bason N."/>
            <person name="Bentley S.D."/>
            <person name="Chillingworth C."/>
            <person name="Chillingworth T."/>
            <person name="Churcher C."/>
            <person name="Clark L."/>
            <person name="Corton C."/>
            <person name="Cronin A."/>
            <person name="Doggett J."/>
            <person name="Dowd L."/>
            <person name="Feltwell T."/>
            <person name="Hance Z."/>
            <person name="Harris B."/>
            <person name="Hauser H."/>
            <person name="Holroyd S."/>
            <person name="Jagels K."/>
            <person name="James K.D."/>
            <person name="Lennard N."/>
            <person name="Line A."/>
            <person name="Mayes R."/>
            <person name="Moule S."/>
            <person name="Mungall K."/>
            <person name="Ormond D."/>
            <person name="Quail M.A."/>
            <person name="Rabbinowitsch E."/>
            <person name="Rutherford K.M."/>
            <person name="Sanders M."/>
            <person name="Sharp S."/>
            <person name="Simmonds M."/>
            <person name="Stevens K."/>
            <person name="Whitehead S."/>
            <person name="Barrell B.G."/>
            <person name="Spratt B.G."/>
            <person name="Parkhill J."/>
        </authorList>
    </citation>
    <scope>NUCLEOTIDE SEQUENCE [LARGE SCALE GENOMIC DNA]</scope>
    <source>
        <strain>MRSA252</strain>
    </source>
</reference>
<feature type="chain" id="PRO_0000151934" description="ATP phosphoribosyltransferase">
    <location>
        <begin position="1"/>
        <end position="204"/>
    </location>
</feature>
<comment type="function">
    <text evidence="1">Catalyzes the condensation of ATP and 5-phosphoribose 1-diphosphate to form N'-(5'-phosphoribosyl)-ATP (PR-ATP). Has a crucial role in the pathway because the rate of histidine biosynthesis seems to be controlled primarily by regulation of HisG enzymatic activity.</text>
</comment>
<comment type="catalytic activity">
    <reaction evidence="1">
        <text>1-(5-phospho-beta-D-ribosyl)-ATP + diphosphate = 5-phospho-alpha-D-ribose 1-diphosphate + ATP</text>
        <dbReference type="Rhea" id="RHEA:18473"/>
        <dbReference type="ChEBI" id="CHEBI:30616"/>
        <dbReference type="ChEBI" id="CHEBI:33019"/>
        <dbReference type="ChEBI" id="CHEBI:58017"/>
        <dbReference type="ChEBI" id="CHEBI:73183"/>
        <dbReference type="EC" id="2.4.2.17"/>
    </reaction>
</comment>
<comment type="pathway">
    <text evidence="1">Amino-acid biosynthesis; L-histidine biosynthesis; L-histidine from 5-phospho-alpha-D-ribose 1-diphosphate: step 1/9.</text>
</comment>
<comment type="subunit">
    <text evidence="1">Heteromultimer composed of HisG and HisZ subunits.</text>
</comment>
<comment type="subcellular location">
    <subcellularLocation>
        <location evidence="1">Cytoplasm</location>
    </subcellularLocation>
</comment>
<comment type="domain">
    <text>Lacks the C-terminal regulatory region which is replaced by HisZ.</text>
</comment>
<comment type="similarity">
    <text evidence="1">Belongs to the ATP phosphoribosyltransferase family. Short subfamily.</text>
</comment>
<proteinExistence type="inferred from homology"/>
<evidence type="ECO:0000255" key="1">
    <source>
        <dbReference type="HAMAP-Rule" id="MF_01018"/>
    </source>
</evidence>
<sequence>MLRIAIAKGRLMDSLINYLDAIEFTTLSETLKNRERQLLLSVDNIECILVKGSDVPIYVEQGIADIGIVGSDILDERHYNVNNLLNMPFGACHFAVAAKPETTNYRKIATSYVHTAETYFKSKGIDVELIKLNGSVELACVVDMVDGIVDIVQTGTTLKANGLVEKQHISDINARLITNKAAYFKKSQLIEQFIRSLEVSIANA</sequence>
<protein>
    <recommendedName>
        <fullName evidence="1">ATP phosphoribosyltransferase</fullName>
        <shortName evidence="1">ATP-PRT</shortName>
        <shortName evidence="1">ATP-PRTase</shortName>
        <ecNumber evidence="1">2.4.2.17</ecNumber>
    </recommendedName>
</protein>
<keyword id="KW-0028">Amino-acid biosynthesis</keyword>
<keyword id="KW-0067">ATP-binding</keyword>
<keyword id="KW-0963">Cytoplasm</keyword>
<keyword id="KW-0328">Glycosyltransferase</keyword>
<keyword id="KW-0368">Histidine biosynthesis</keyword>
<keyword id="KW-0547">Nucleotide-binding</keyword>
<keyword id="KW-0808">Transferase</keyword>
<gene>
    <name evidence="1" type="primary">hisG</name>
    <name type="ordered locus">SAR2761</name>
</gene>
<accession>Q6GDC5</accession>
<name>HIS1_STAAR</name>
<dbReference type="EC" id="2.4.2.17" evidence="1"/>
<dbReference type="EMBL" id="BX571856">
    <property type="protein sequence ID" value="CAG41736.1"/>
    <property type="molecule type" value="Genomic_DNA"/>
</dbReference>
<dbReference type="RefSeq" id="WP_000944135.1">
    <property type="nucleotide sequence ID" value="NC_002952.2"/>
</dbReference>
<dbReference type="SMR" id="Q6GDC5"/>
<dbReference type="KEGG" id="sar:SAR2761"/>
<dbReference type="HOGENOM" id="CLU_038115_2_0_9"/>
<dbReference type="UniPathway" id="UPA00031">
    <property type="reaction ID" value="UER00006"/>
</dbReference>
<dbReference type="Proteomes" id="UP000000596">
    <property type="component" value="Chromosome"/>
</dbReference>
<dbReference type="GO" id="GO:0005737">
    <property type="term" value="C:cytoplasm"/>
    <property type="evidence" value="ECO:0007669"/>
    <property type="project" value="UniProtKB-SubCell"/>
</dbReference>
<dbReference type="GO" id="GO:0005524">
    <property type="term" value="F:ATP binding"/>
    <property type="evidence" value="ECO:0007669"/>
    <property type="project" value="UniProtKB-KW"/>
</dbReference>
<dbReference type="GO" id="GO:0003879">
    <property type="term" value="F:ATP phosphoribosyltransferase activity"/>
    <property type="evidence" value="ECO:0007669"/>
    <property type="project" value="UniProtKB-UniRule"/>
</dbReference>
<dbReference type="GO" id="GO:0000105">
    <property type="term" value="P:L-histidine biosynthetic process"/>
    <property type="evidence" value="ECO:0007669"/>
    <property type="project" value="UniProtKB-UniRule"/>
</dbReference>
<dbReference type="CDD" id="cd13595">
    <property type="entry name" value="PBP2_HisGs"/>
    <property type="match status" value="1"/>
</dbReference>
<dbReference type="FunFam" id="3.40.190.10:FF:000008">
    <property type="entry name" value="ATP phosphoribosyltransferase"/>
    <property type="match status" value="1"/>
</dbReference>
<dbReference type="Gene3D" id="3.40.190.10">
    <property type="entry name" value="Periplasmic binding protein-like II"/>
    <property type="match status" value="2"/>
</dbReference>
<dbReference type="HAMAP" id="MF_01018">
    <property type="entry name" value="HisG_Short"/>
    <property type="match status" value="1"/>
</dbReference>
<dbReference type="InterPro" id="IPR013820">
    <property type="entry name" value="ATP_PRibTrfase_cat"/>
</dbReference>
<dbReference type="InterPro" id="IPR001348">
    <property type="entry name" value="ATP_PRibTrfase_HisG"/>
</dbReference>
<dbReference type="InterPro" id="IPR024893">
    <property type="entry name" value="ATP_PRibTrfase_HisG_short"/>
</dbReference>
<dbReference type="NCBIfam" id="TIGR00070">
    <property type="entry name" value="hisG"/>
    <property type="match status" value="1"/>
</dbReference>
<dbReference type="PANTHER" id="PTHR21403:SF8">
    <property type="entry name" value="ATP PHOSPHORIBOSYLTRANSFERASE"/>
    <property type="match status" value="1"/>
</dbReference>
<dbReference type="PANTHER" id="PTHR21403">
    <property type="entry name" value="ATP PHOSPHORIBOSYLTRANSFERASE ATP-PRTASE"/>
    <property type="match status" value="1"/>
</dbReference>
<dbReference type="Pfam" id="PF01634">
    <property type="entry name" value="HisG"/>
    <property type="match status" value="1"/>
</dbReference>
<dbReference type="SUPFAM" id="SSF53850">
    <property type="entry name" value="Periplasmic binding protein-like II"/>
    <property type="match status" value="1"/>
</dbReference>
<organism>
    <name type="scientific">Staphylococcus aureus (strain MRSA252)</name>
    <dbReference type="NCBI Taxonomy" id="282458"/>
    <lineage>
        <taxon>Bacteria</taxon>
        <taxon>Bacillati</taxon>
        <taxon>Bacillota</taxon>
        <taxon>Bacilli</taxon>
        <taxon>Bacillales</taxon>
        <taxon>Staphylococcaceae</taxon>
        <taxon>Staphylococcus</taxon>
    </lineage>
</organism>